<gene>
    <name evidence="1" type="primary">SEY1</name>
    <name type="ORF">BDBG_09335</name>
</gene>
<protein>
    <recommendedName>
        <fullName evidence="1">Protein SEY1</fullName>
        <ecNumber evidence="1">3.6.5.-</ecNumber>
    </recommendedName>
</protein>
<comment type="function">
    <text evidence="1">Cooperates with the reticulon proteins and tubule-shaping DP1 family proteins to generate and maintain the structure of the tubular endoplasmic reticulum network. Has GTPase activity, which is required for its function in ER organization.</text>
</comment>
<comment type="subcellular location">
    <subcellularLocation>
        <location evidence="1">Endoplasmic reticulum membrane</location>
        <topology evidence="1">Multi-pass membrane protein</topology>
    </subcellularLocation>
    <text evidence="1">Enriched in the cortical ER. Concentrated in punctae along the ER tubules.</text>
</comment>
<comment type="similarity">
    <text evidence="2">Belongs to the TRAFAC class dynamin-like GTPase superfamily. GB1/RHD3 GTPase family. RHD3 subfamily.</text>
</comment>
<proteinExistence type="inferred from homology"/>
<feature type="chain" id="PRO_0000384968" description="Protein SEY1">
    <location>
        <begin position="1"/>
        <end position="875"/>
    </location>
</feature>
<feature type="topological domain" description="Cytoplasmic" evidence="1">
    <location>
        <begin position="1"/>
        <end position="749"/>
    </location>
</feature>
<feature type="transmembrane region" description="Helical" evidence="1">
    <location>
        <begin position="750"/>
        <end position="770"/>
    </location>
</feature>
<feature type="topological domain" description="Lumenal" evidence="1">
    <location>
        <begin position="771"/>
        <end position="773"/>
    </location>
</feature>
<feature type="transmembrane region" description="Helical" evidence="1">
    <location>
        <begin position="774"/>
        <end position="794"/>
    </location>
</feature>
<feature type="topological domain" description="Cytoplasmic" evidence="1">
    <location>
        <begin position="795"/>
        <end position="875"/>
    </location>
</feature>
<feature type="domain" description="GB1/RHD3-type G" evidence="2">
    <location>
        <begin position="49"/>
        <end position="307"/>
    </location>
</feature>
<feature type="region of interest" description="Disordered" evidence="3">
    <location>
        <begin position="676"/>
        <end position="704"/>
    </location>
</feature>
<feature type="region of interest" description="Disordered" evidence="3">
    <location>
        <begin position="831"/>
        <end position="875"/>
    </location>
</feature>
<feature type="coiled-coil region" evidence="1">
    <location>
        <begin position="482"/>
        <end position="506"/>
    </location>
</feature>
<feature type="compositionally biased region" description="Acidic residues" evidence="3">
    <location>
        <begin position="690"/>
        <end position="704"/>
    </location>
</feature>
<feature type="compositionally biased region" description="Basic and acidic residues" evidence="3">
    <location>
        <begin position="839"/>
        <end position="864"/>
    </location>
</feature>
<feature type="compositionally biased region" description="Acidic residues" evidence="3">
    <location>
        <begin position="865"/>
        <end position="875"/>
    </location>
</feature>
<feature type="binding site" evidence="1">
    <location>
        <begin position="59"/>
        <end position="66"/>
    </location>
    <ligand>
        <name>GTP</name>
        <dbReference type="ChEBI" id="CHEBI:37565"/>
    </ligand>
</feature>
<evidence type="ECO:0000255" key="1">
    <source>
        <dbReference type="HAMAP-Rule" id="MF_03109"/>
    </source>
</evidence>
<evidence type="ECO:0000255" key="2">
    <source>
        <dbReference type="PROSITE-ProRule" id="PRU01052"/>
    </source>
</evidence>
<evidence type="ECO:0000256" key="3">
    <source>
        <dbReference type="SAM" id="MobiDB-lite"/>
    </source>
</evidence>
<organism>
    <name type="scientific">Blastomyces gilchristii (strain SLH14081)</name>
    <name type="common">Blastomyces dermatitidis</name>
    <dbReference type="NCBI Taxonomy" id="559298"/>
    <lineage>
        <taxon>Eukaryota</taxon>
        <taxon>Fungi</taxon>
        <taxon>Dikarya</taxon>
        <taxon>Ascomycota</taxon>
        <taxon>Pezizomycotina</taxon>
        <taxon>Eurotiomycetes</taxon>
        <taxon>Eurotiomycetidae</taxon>
        <taxon>Onygenales</taxon>
        <taxon>Ajellomycetaceae</taxon>
        <taxon>Blastomyces</taxon>
    </lineage>
</organism>
<keyword id="KW-0175">Coiled coil</keyword>
<keyword id="KW-0256">Endoplasmic reticulum</keyword>
<keyword id="KW-0342">GTP-binding</keyword>
<keyword id="KW-0378">Hydrolase</keyword>
<keyword id="KW-0472">Membrane</keyword>
<keyword id="KW-0547">Nucleotide-binding</keyword>
<keyword id="KW-1185">Reference proteome</keyword>
<keyword id="KW-0812">Transmembrane</keyword>
<keyword id="KW-1133">Transmembrane helix</keyword>
<name>SEY1_BLAGS</name>
<dbReference type="EC" id="3.6.5.-" evidence="1"/>
<dbReference type="EMBL" id="GG657486">
    <property type="protein sequence ID" value="OAT14270.1"/>
    <property type="molecule type" value="Genomic_DNA"/>
</dbReference>
<dbReference type="RefSeq" id="XP_002620311.1">
    <property type="nucleotide sequence ID" value="XM_002620265.1"/>
</dbReference>
<dbReference type="SMR" id="C5K3E1"/>
<dbReference type="STRING" id="559298.C5K3E1"/>
<dbReference type="GeneID" id="8501011"/>
<dbReference type="KEGG" id="bgh:BDBG_09335"/>
<dbReference type="VEuPathDB" id="FungiDB:BDBG_09335"/>
<dbReference type="HOGENOM" id="CLU_011270_0_0_1"/>
<dbReference type="OrthoDB" id="1597724at2759"/>
<dbReference type="Proteomes" id="UP000002038">
    <property type="component" value="Unassembled WGS sequence"/>
</dbReference>
<dbReference type="GO" id="GO:0005789">
    <property type="term" value="C:endoplasmic reticulum membrane"/>
    <property type="evidence" value="ECO:0007669"/>
    <property type="project" value="UniProtKB-SubCell"/>
</dbReference>
<dbReference type="GO" id="GO:0005525">
    <property type="term" value="F:GTP binding"/>
    <property type="evidence" value="ECO:0007669"/>
    <property type="project" value="UniProtKB-UniRule"/>
</dbReference>
<dbReference type="GO" id="GO:0003924">
    <property type="term" value="F:GTPase activity"/>
    <property type="evidence" value="ECO:0007669"/>
    <property type="project" value="UniProtKB-UniRule"/>
</dbReference>
<dbReference type="GO" id="GO:0016320">
    <property type="term" value="P:endoplasmic reticulum membrane fusion"/>
    <property type="evidence" value="ECO:0007669"/>
    <property type="project" value="TreeGrafter"/>
</dbReference>
<dbReference type="CDD" id="cd01851">
    <property type="entry name" value="GBP"/>
    <property type="match status" value="1"/>
</dbReference>
<dbReference type="FunFam" id="3.40.50.300:FF:000727">
    <property type="entry name" value="Protein SEY1 homolog"/>
    <property type="match status" value="1"/>
</dbReference>
<dbReference type="Gene3D" id="3.40.50.300">
    <property type="entry name" value="P-loop containing nucleotide triphosphate hydrolases"/>
    <property type="match status" value="1"/>
</dbReference>
<dbReference type="HAMAP" id="MF_03109">
    <property type="entry name" value="Sey1"/>
    <property type="match status" value="1"/>
</dbReference>
<dbReference type="InterPro" id="IPR030386">
    <property type="entry name" value="G_GB1_RHD3_dom"/>
</dbReference>
<dbReference type="InterPro" id="IPR027417">
    <property type="entry name" value="P-loop_NTPase"/>
</dbReference>
<dbReference type="InterPro" id="IPR008803">
    <property type="entry name" value="RHD3/Sey1"/>
</dbReference>
<dbReference type="InterPro" id="IPR046758">
    <property type="entry name" value="Sey1/RHD3-like_3HB"/>
</dbReference>
<dbReference type="PANTHER" id="PTHR45923">
    <property type="entry name" value="PROTEIN SEY1"/>
    <property type="match status" value="1"/>
</dbReference>
<dbReference type="PANTHER" id="PTHR45923:SF2">
    <property type="entry name" value="PROTEIN SEY1"/>
    <property type="match status" value="1"/>
</dbReference>
<dbReference type="Pfam" id="PF05879">
    <property type="entry name" value="RHD3_GTPase"/>
    <property type="match status" value="1"/>
</dbReference>
<dbReference type="Pfam" id="PF20428">
    <property type="entry name" value="Sey1_3HB"/>
    <property type="match status" value="1"/>
</dbReference>
<dbReference type="SUPFAM" id="SSF52540">
    <property type="entry name" value="P-loop containing nucleoside triphosphate hydrolases"/>
    <property type="match status" value="1"/>
</dbReference>
<dbReference type="PROSITE" id="PS51715">
    <property type="entry name" value="G_GB1_RHD3"/>
    <property type="match status" value="1"/>
</dbReference>
<reference key="1">
    <citation type="journal article" date="2015" name="PLoS Genet.">
        <title>The dynamic genome and transcriptome of the human fungal pathogen Blastomyces and close relative Emmonsia.</title>
        <authorList>
            <person name="Munoz J.F."/>
            <person name="Gauthier G.M."/>
            <person name="Desjardins C.A."/>
            <person name="Gallo J.E."/>
            <person name="Holder J."/>
            <person name="Sullivan T.D."/>
            <person name="Marty A.J."/>
            <person name="Carmen J.C."/>
            <person name="Chen Z."/>
            <person name="Ding L."/>
            <person name="Gujja S."/>
            <person name="Magrini V."/>
            <person name="Misas E."/>
            <person name="Mitreva M."/>
            <person name="Priest M."/>
            <person name="Saif S."/>
            <person name="Whiston E.A."/>
            <person name="Young S."/>
            <person name="Zeng Q."/>
            <person name="Goldman W.E."/>
            <person name="Mardis E.R."/>
            <person name="Taylor J.W."/>
            <person name="McEwen J.G."/>
            <person name="Clay O.K."/>
            <person name="Klein B.S."/>
            <person name="Cuomo C.A."/>
        </authorList>
    </citation>
    <scope>NUCLEOTIDE SEQUENCE [LARGE SCALE GENOMIC DNA]</scope>
    <source>
        <strain>SLH14081</strain>
    </source>
</reference>
<accession>C5K3E1</accession>
<accession>A0A179V2F2</accession>
<sequence>MVANGHFASNGEGQDSGSYEHGVQVIDEDKEFNPNVSRYLTYENVTPAGFNYHLISVFGSQSTGKSTLLNHLFGTHFSVMSETERRQTTKGIWLSKNKRVESSKDRDPQMKMADNILVMDVEGTDGRERGEDQDFERKSALFALATSEVLIVNIWEHQVGLYQGANMGLLKTVFEVNLELFLKDNKSTPRSLLFFVIRDFVGTTPLQNLQNTLLQDLNRIWSSLSKPAGLENSTINDYFDFAFAGLPHKNFQPEKFVDEVQKLSTRFRNAHRDPNNVDSRGTGSIEGGIFLPEYHRRIPADGFAVYAEGVWDQIVNNKDLDLPTQQELLAQFRCDEISREALVAFDEAISPFESKQAEAVQAGSPQVLGGLGPVMRNARMNAVKNFDAEASRYHKRVYQMKKSELEEKIDTRLKALFLGQLNAAHRSGVQDFSESVSAAVKAGQKRGASYDFAEIVSRERQLAIEKFEKEARSTLVEDAPWSNYQQELSLYQKDLERISGQLRRDEMRRLATRVERWVRSRLGESVDLEFNALGSGRGGSGAPEFGDKPSENTIWDRVWTIFVDTVLDAERRFTERASSFDASLDEVDVGLWRLRRKSWGVLRAKIEEEVMEGNLLLKLRENFEDKFRYDDAGVPRIWRPTDDIESVYTQARESTLTLIPLLARFRLAETNAPPPLDKWIGHTPSSATPADEEDLTPIGGVDEDEGKSLEEEMTMIGEAKKQDLIVRFKKTADGVYVEAKRSAIGGITQVPLYFYGLLLALGWNEIMAVLRNPAYFFLLFVCAIGAYVTYQLNLWGPIIKMTEAASHQALEEGKRRLRDFLEASDTGRQAMAMSGARNATEEHEMSNLNRKSGERGGQKYRGEDVADDDDVDDDF</sequence>